<gene>
    <name evidence="2" type="primary">tuf</name>
    <name type="ordered locus">BAA_0124</name>
</gene>
<reference key="1">
    <citation type="submission" date="2009-04" db="EMBL/GenBank/DDBJ databases">
        <title>Genome sequence of Bacillus anthracis A0248.</title>
        <authorList>
            <person name="Dodson R.J."/>
            <person name="Munk A.C."/>
            <person name="Bruce D."/>
            <person name="Detter C."/>
            <person name="Tapia R."/>
            <person name="Sutton G."/>
            <person name="Sims D."/>
            <person name="Brettin T."/>
        </authorList>
    </citation>
    <scope>NUCLEOTIDE SEQUENCE [LARGE SCALE GENOMIC DNA]</scope>
    <source>
        <strain>A0248</strain>
    </source>
</reference>
<accession>C3P9Q3</accession>
<sequence>MAKAKFERSKPHVNIGTIGHVDHGKTTLTAAITTVLAKAGGAEARGYDQIDAAPEERERGITISTAHVEYETETRHYAHVDCPGHADYVKNMITGAAQMDGGILVVSAADGPMPQTREHILLSRQVGVPYIVVFLNKCDMVDDEELLELVEMEVRDLLSEYGFPGDDIPVIKGSALKALQGEADWEAKIIELMAEVDAYIPTPERETDKPFLMPVEDVFSITGRGTVATGRVERGIVKVGDVVEIIGLAEENASTTVTGVEMFRKLLDQAQAGDNIGALLRGVAREDIQRGQVLAKSGSVKAHAKFKAEVFVLSKEEGGRHTPFFANYRPQFYFRTTDVTGIIQLPEGTEMVMPGDNIEMTIELIAPIAIEEGTKFSIREGGRTVGYGVVATIVE</sequence>
<feature type="chain" id="PRO_1000201379" description="Elongation factor Tu">
    <location>
        <begin position="1"/>
        <end position="395"/>
    </location>
</feature>
<feature type="domain" description="tr-type G">
    <location>
        <begin position="10"/>
        <end position="204"/>
    </location>
</feature>
<feature type="region of interest" description="G1" evidence="1">
    <location>
        <begin position="19"/>
        <end position="26"/>
    </location>
</feature>
<feature type="region of interest" description="G2" evidence="1">
    <location>
        <begin position="60"/>
        <end position="64"/>
    </location>
</feature>
<feature type="region of interest" description="G3" evidence="1">
    <location>
        <begin position="81"/>
        <end position="84"/>
    </location>
</feature>
<feature type="region of interest" description="G4" evidence="1">
    <location>
        <begin position="136"/>
        <end position="139"/>
    </location>
</feature>
<feature type="region of interest" description="G5" evidence="1">
    <location>
        <begin position="174"/>
        <end position="176"/>
    </location>
</feature>
<feature type="binding site" evidence="2">
    <location>
        <begin position="19"/>
        <end position="26"/>
    </location>
    <ligand>
        <name>GTP</name>
        <dbReference type="ChEBI" id="CHEBI:37565"/>
    </ligand>
</feature>
<feature type="binding site" evidence="2">
    <location>
        <position position="26"/>
    </location>
    <ligand>
        <name>Mg(2+)</name>
        <dbReference type="ChEBI" id="CHEBI:18420"/>
    </ligand>
</feature>
<feature type="binding site" evidence="2">
    <location>
        <begin position="81"/>
        <end position="85"/>
    </location>
    <ligand>
        <name>GTP</name>
        <dbReference type="ChEBI" id="CHEBI:37565"/>
    </ligand>
</feature>
<feature type="binding site" evidence="2">
    <location>
        <begin position="136"/>
        <end position="139"/>
    </location>
    <ligand>
        <name>GTP</name>
        <dbReference type="ChEBI" id="CHEBI:37565"/>
    </ligand>
</feature>
<keyword id="KW-0963">Cytoplasm</keyword>
<keyword id="KW-0251">Elongation factor</keyword>
<keyword id="KW-0342">GTP-binding</keyword>
<keyword id="KW-0378">Hydrolase</keyword>
<keyword id="KW-0460">Magnesium</keyword>
<keyword id="KW-0479">Metal-binding</keyword>
<keyword id="KW-0547">Nucleotide-binding</keyword>
<keyword id="KW-0648">Protein biosynthesis</keyword>
<comment type="function">
    <text evidence="2">GTP hydrolase that promotes the GTP-dependent binding of aminoacyl-tRNA to the A-site of ribosomes during protein biosynthesis.</text>
</comment>
<comment type="catalytic activity">
    <reaction evidence="2">
        <text>GTP + H2O = GDP + phosphate + H(+)</text>
        <dbReference type="Rhea" id="RHEA:19669"/>
        <dbReference type="ChEBI" id="CHEBI:15377"/>
        <dbReference type="ChEBI" id="CHEBI:15378"/>
        <dbReference type="ChEBI" id="CHEBI:37565"/>
        <dbReference type="ChEBI" id="CHEBI:43474"/>
        <dbReference type="ChEBI" id="CHEBI:58189"/>
        <dbReference type="EC" id="3.6.5.3"/>
    </reaction>
    <physiologicalReaction direction="left-to-right" evidence="2">
        <dbReference type="Rhea" id="RHEA:19670"/>
    </physiologicalReaction>
</comment>
<comment type="subunit">
    <text evidence="2">Monomer.</text>
</comment>
<comment type="subcellular location">
    <subcellularLocation>
        <location evidence="2">Cytoplasm</location>
    </subcellularLocation>
</comment>
<comment type="similarity">
    <text evidence="2">Belongs to the TRAFAC class translation factor GTPase superfamily. Classic translation factor GTPase family. EF-Tu/EF-1A subfamily.</text>
</comment>
<evidence type="ECO:0000250" key="1"/>
<evidence type="ECO:0000255" key="2">
    <source>
        <dbReference type="HAMAP-Rule" id="MF_00118"/>
    </source>
</evidence>
<organism>
    <name type="scientific">Bacillus anthracis (strain A0248)</name>
    <dbReference type="NCBI Taxonomy" id="592021"/>
    <lineage>
        <taxon>Bacteria</taxon>
        <taxon>Bacillati</taxon>
        <taxon>Bacillota</taxon>
        <taxon>Bacilli</taxon>
        <taxon>Bacillales</taxon>
        <taxon>Bacillaceae</taxon>
        <taxon>Bacillus</taxon>
        <taxon>Bacillus cereus group</taxon>
    </lineage>
</organism>
<name>EFTU_BACAA</name>
<proteinExistence type="inferred from homology"/>
<protein>
    <recommendedName>
        <fullName evidence="2">Elongation factor Tu</fullName>
        <shortName evidence="2">EF-Tu</shortName>
        <ecNumber evidence="2">3.6.5.3</ecNumber>
    </recommendedName>
</protein>
<dbReference type="EC" id="3.6.5.3" evidence="2"/>
<dbReference type="EMBL" id="CP001598">
    <property type="protein sequence ID" value="ACQ46352.1"/>
    <property type="molecule type" value="Genomic_DNA"/>
</dbReference>
<dbReference type="RefSeq" id="WP_001029614.1">
    <property type="nucleotide sequence ID" value="NC_012659.1"/>
</dbReference>
<dbReference type="SMR" id="C3P9Q3"/>
<dbReference type="GeneID" id="93010945"/>
<dbReference type="KEGG" id="bai:BAA_0124"/>
<dbReference type="HOGENOM" id="CLU_007265_0_1_9"/>
<dbReference type="GO" id="GO:0005829">
    <property type="term" value="C:cytosol"/>
    <property type="evidence" value="ECO:0007669"/>
    <property type="project" value="TreeGrafter"/>
</dbReference>
<dbReference type="GO" id="GO:0005525">
    <property type="term" value="F:GTP binding"/>
    <property type="evidence" value="ECO:0007669"/>
    <property type="project" value="UniProtKB-UniRule"/>
</dbReference>
<dbReference type="GO" id="GO:0003924">
    <property type="term" value="F:GTPase activity"/>
    <property type="evidence" value="ECO:0007669"/>
    <property type="project" value="InterPro"/>
</dbReference>
<dbReference type="GO" id="GO:0003746">
    <property type="term" value="F:translation elongation factor activity"/>
    <property type="evidence" value="ECO:0007669"/>
    <property type="project" value="UniProtKB-UniRule"/>
</dbReference>
<dbReference type="CDD" id="cd01884">
    <property type="entry name" value="EF_Tu"/>
    <property type="match status" value="1"/>
</dbReference>
<dbReference type="CDD" id="cd03697">
    <property type="entry name" value="EFTU_II"/>
    <property type="match status" value="1"/>
</dbReference>
<dbReference type="CDD" id="cd03707">
    <property type="entry name" value="EFTU_III"/>
    <property type="match status" value="1"/>
</dbReference>
<dbReference type="FunFam" id="2.40.30.10:FF:000001">
    <property type="entry name" value="Elongation factor Tu"/>
    <property type="match status" value="1"/>
</dbReference>
<dbReference type="FunFam" id="3.40.50.300:FF:000003">
    <property type="entry name" value="Elongation factor Tu"/>
    <property type="match status" value="1"/>
</dbReference>
<dbReference type="Gene3D" id="3.40.50.300">
    <property type="entry name" value="P-loop containing nucleotide triphosphate hydrolases"/>
    <property type="match status" value="1"/>
</dbReference>
<dbReference type="Gene3D" id="2.40.30.10">
    <property type="entry name" value="Translation factors"/>
    <property type="match status" value="2"/>
</dbReference>
<dbReference type="HAMAP" id="MF_00118_B">
    <property type="entry name" value="EF_Tu_B"/>
    <property type="match status" value="1"/>
</dbReference>
<dbReference type="InterPro" id="IPR041709">
    <property type="entry name" value="EF-Tu_GTP-bd"/>
</dbReference>
<dbReference type="InterPro" id="IPR050055">
    <property type="entry name" value="EF-Tu_GTPase"/>
</dbReference>
<dbReference type="InterPro" id="IPR004161">
    <property type="entry name" value="EFTu-like_2"/>
</dbReference>
<dbReference type="InterPro" id="IPR033720">
    <property type="entry name" value="EFTU_2"/>
</dbReference>
<dbReference type="InterPro" id="IPR031157">
    <property type="entry name" value="G_TR_CS"/>
</dbReference>
<dbReference type="InterPro" id="IPR027417">
    <property type="entry name" value="P-loop_NTPase"/>
</dbReference>
<dbReference type="InterPro" id="IPR005225">
    <property type="entry name" value="Small_GTP-bd"/>
</dbReference>
<dbReference type="InterPro" id="IPR000795">
    <property type="entry name" value="T_Tr_GTP-bd_dom"/>
</dbReference>
<dbReference type="InterPro" id="IPR009000">
    <property type="entry name" value="Transl_B-barrel_sf"/>
</dbReference>
<dbReference type="InterPro" id="IPR009001">
    <property type="entry name" value="Transl_elong_EF1A/Init_IF2_C"/>
</dbReference>
<dbReference type="InterPro" id="IPR004541">
    <property type="entry name" value="Transl_elong_EFTu/EF1A_bac/org"/>
</dbReference>
<dbReference type="InterPro" id="IPR004160">
    <property type="entry name" value="Transl_elong_EFTu/EF1A_C"/>
</dbReference>
<dbReference type="NCBIfam" id="TIGR00485">
    <property type="entry name" value="EF-Tu"/>
    <property type="match status" value="1"/>
</dbReference>
<dbReference type="NCBIfam" id="NF000766">
    <property type="entry name" value="PRK00049.1"/>
    <property type="match status" value="1"/>
</dbReference>
<dbReference type="NCBIfam" id="NF009372">
    <property type="entry name" value="PRK12735.1"/>
    <property type="match status" value="1"/>
</dbReference>
<dbReference type="NCBIfam" id="NF009373">
    <property type="entry name" value="PRK12736.1"/>
    <property type="match status" value="1"/>
</dbReference>
<dbReference type="NCBIfam" id="TIGR00231">
    <property type="entry name" value="small_GTP"/>
    <property type="match status" value="1"/>
</dbReference>
<dbReference type="PANTHER" id="PTHR43721:SF22">
    <property type="entry name" value="ELONGATION FACTOR TU, MITOCHONDRIAL"/>
    <property type="match status" value="1"/>
</dbReference>
<dbReference type="PANTHER" id="PTHR43721">
    <property type="entry name" value="ELONGATION FACTOR TU-RELATED"/>
    <property type="match status" value="1"/>
</dbReference>
<dbReference type="Pfam" id="PF00009">
    <property type="entry name" value="GTP_EFTU"/>
    <property type="match status" value="1"/>
</dbReference>
<dbReference type="Pfam" id="PF03144">
    <property type="entry name" value="GTP_EFTU_D2"/>
    <property type="match status" value="1"/>
</dbReference>
<dbReference type="Pfam" id="PF03143">
    <property type="entry name" value="GTP_EFTU_D3"/>
    <property type="match status" value="1"/>
</dbReference>
<dbReference type="PRINTS" id="PR00315">
    <property type="entry name" value="ELONGATNFCT"/>
</dbReference>
<dbReference type="SUPFAM" id="SSF50465">
    <property type="entry name" value="EF-Tu/eEF-1alpha/eIF2-gamma C-terminal domain"/>
    <property type="match status" value="1"/>
</dbReference>
<dbReference type="SUPFAM" id="SSF52540">
    <property type="entry name" value="P-loop containing nucleoside triphosphate hydrolases"/>
    <property type="match status" value="1"/>
</dbReference>
<dbReference type="SUPFAM" id="SSF50447">
    <property type="entry name" value="Translation proteins"/>
    <property type="match status" value="1"/>
</dbReference>
<dbReference type="PROSITE" id="PS00301">
    <property type="entry name" value="G_TR_1"/>
    <property type="match status" value="1"/>
</dbReference>
<dbReference type="PROSITE" id="PS51722">
    <property type="entry name" value="G_TR_2"/>
    <property type="match status" value="1"/>
</dbReference>